<gene>
    <name evidence="20" type="primary">Ncam1</name>
    <name type="synonym">Ncam</name>
</gene>
<name>NCAM1_MOUSE</name>
<accession>P13595</accession>
<accession>P13594</accession>
<accession>Q61949</accession>
<accession>Q61950</accession>
<accession>Q6LBU8</accession>
<accession>Q8BQ96</accession>
<accession>Q8C4B2</accession>
<accession>Q921P2</accession>
<accession>Q9R2A7</accession>
<evidence type="ECO:0000250" key="1">
    <source>
        <dbReference type="UniProtKB" id="P13591"/>
    </source>
</evidence>
<evidence type="ECO:0000255" key="2"/>
<evidence type="ECO:0000255" key="3">
    <source>
        <dbReference type="PROSITE-ProRule" id="PRU00316"/>
    </source>
</evidence>
<evidence type="ECO:0000256" key="4">
    <source>
        <dbReference type="SAM" id="MobiDB-lite"/>
    </source>
</evidence>
<evidence type="ECO:0000269" key="5">
    <source>
    </source>
</evidence>
<evidence type="ECO:0000269" key="6">
    <source>
    </source>
</evidence>
<evidence type="ECO:0000269" key="7">
    <source>
    </source>
</evidence>
<evidence type="ECO:0000269" key="8">
    <source>
    </source>
</evidence>
<evidence type="ECO:0000269" key="9">
    <source>
    </source>
</evidence>
<evidence type="ECO:0000269" key="10">
    <source>
    </source>
</evidence>
<evidence type="ECO:0000269" key="11">
    <source>
    </source>
</evidence>
<evidence type="ECO:0000269" key="12">
    <source>
    </source>
</evidence>
<evidence type="ECO:0000269" key="13">
    <source>
    </source>
</evidence>
<evidence type="ECO:0000303" key="14">
    <source>
    </source>
</evidence>
<evidence type="ECO:0000303" key="15">
    <source>
    </source>
</evidence>
<evidence type="ECO:0000303" key="16">
    <source>
    </source>
</evidence>
<evidence type="ECO:0000303" key="17">
    <source>
    </source>
</evidence>
<evidence type="ECO:0000303" key="18">
    <source>
    </source>
</evidence>
<evidence type="ECO:0000305" key="19"/>
<evidence type="ECO:0000312" key="20">
    <source>
        <dbReference type="MGI" id="MGI:97281"/>
    </source>
</evidence>
<evidence type="ECO:0007744" key="21">
    <source>
        <dbReference type="PDB" id="2NCM"/>
    </source>
</evidence>
<evidence type="ECO:0007744" key="22">
    <source>
        <dbReference type="PDB" id="3NCM"/>
    </source>
</evidence>
<evidence type="ECO:0007744" key="23">
    <source>
    </source>
</evidence>
<evidence type="ECO:0007744" key="24">
    <source>
    </source>
</evidence>
<evidence type="ECO:0007744" key="25">
    <source>
    </source>
</evidence>
<evidence type="ECO:0007829" key="26">
    <source>
        <dbReference type="PDB" id="2NCM"/>
    </source>
</evidence>
<evidence type="ECO:0007829" key="27">
    <source>
        <dbReference type="PDB" id="3NCM"/>
    </source>
</evidence>
<comment type="function">
    <text>This protein is a cell adhesion molecule involved in neuron-neuron adhesion, neurite fasciculation, outgrowth of neurites, etc.</text>
</comment>
<comment type="subunit">
    <text evidence="6 10 12">Interacts with MDK. Found in a complex with SLC39A6, SLC39A10 and with NCAM1; this complex controls NCAM1 phosphorylation and integration into focal adhesion complexes during epithelial-tomesenchymal transition (PubMed:28098160). Interacts with synaptic plasticity regulator PANTS (PubMed:35771867).</text>
</comment>
<comment type="subcellular location">
    <molecule>Isoform 1</molecule>
    <subcellularLocation>
        <location>Cell membrane</location>
        <topology>Single-pass type I membrane protein</topology>
    </subcellularLocation>
</comment>
<comment type="subcellular location">
    <molecule>Isoform 2</molecule>
    <subcellularLocation>
        <location>Cell membrane</location>
        <topology>Single-pass type I membrane protein</topology>
    </subcellularLocation>
</comment>
<comment type="subcellular location">
    <molecule>Isoform 3</molecule>
    <subcellularLocation>
        <location>Cell membrane</location>
        <topology>Lipid-anchor</topology>
        <topology>GPI-anchor</topology>
    </subcellularLocation>
</comment>
<comment type="alternative products">
    <event type="alternative splicing"/>
    <isoform>
        <id>P13595-1</id>
        <name>1</name>
        <name>N-CAM 180</name>
        <sequence type="displayed"/>
    </isoform>
    <isoform>
        <id>P13595-2</id>
        <name>2</name>
        <name>N-CAM 140</name>
        <sequence type="described" ref="VSP_002588"/>
    </isoform>
    <isoform>
        <id>P13595-3</id>
        <id>P13594-1</id>
        <name>3</name>
        <name>N-CAM 120</name>
        <sequence type="described" ref="VSP_034828 VSP_034829"/>
    </isoform>
    <isoform>
        <id>P13595-4</id>
        <name>4</name>
        <sequence type="described" ref="VSP_034826 VSP_034827"/>
    </isoform>
</comment>
<comment type="PTM">
    <text evidence="1">Polysialylated by ST8SIA2 and ST8SIA4. Polysialylation modulates cell interactions by confering both attractive and repulsive properties that are highly regulated by ST8SIA2 and ST8SIA4. Polysialylation is formed on a-2,3-linked sialic acid of core glycans.</text>
</comment>
<reference key="1">
    <citation type="journal article" date="1987" name="EMBO J.">
        <title>Isolation and nucleotide sequence of mouse NCAM cDNA that codes for a Mr 79,000 polypeptide without a membrane-spanning region.</title>
        <authorList>
            <person name="Barthels D."/>
            <person name="Santoni M.-J."/>
            <person name="Wille W."/>
            <person name="Ruppert C."/>
            <person name="Chaix J.-C."/>
            <person name="Hirsch M.-R."/>
            <person name="Fontecilla-Camps J.-C."/>
            <person name="Goridis C."/>
        </authorList>
    </citation>
    <scope>NUCLEOTIDE SEQUENCE [MRNA] (ISOFORM 3)</scope>
    <source>
        <strain>C57BL/6J</strain>
        <tissue>Brain</tissue>
    </source>
</reference>
<reference key="2">
    <citation type="journal article" date="2004" name="Genome Res.">
        <title>The status, quality, and expansion of the NIH full-length cDNA project: the Mammalian Gene Collection (MGC).</title>
        <authorList>
            <consortium name="The MGC Project Team"/>
        </authorList>
    </citation>
    <scope>NUCLEOTIDE SEQUENCE [LARGE SCALE MRNA] (ISOFORM 4)</scope>
    <source>
        <strain>FVB/N</strain>
        <tissue>Mammary tumor</tissue>
    </source>
</reference>
<reference key="3">
    <citation type="journal article" date="2005" name="Science">
        <title>The transcriptional landscape of the mammalian genome.</title>
        <authorList>
            <person name="Carninci P."/>
            <person name="Kasukawa T."/>
            <person name="Katayama S."/>
            <person name="Gough J."/>
            <person name="Frith M.C."/>
            <person name="Maeda N."/>
            <person name="Oyama R."/>
            <person name="Ravasi T."/>
            <person name="Lenhard B."/>
            <person name="Wells C."/>
            <person name="Kodzius R."/>
            <person name="Shimokawa K."/>
            <person name="Bajic V.B."/>
            <person name="Brenner S.E."/>
            <person name="Batalov S."/>
            <person name="Forrest A.R."/>
            <person name="Zavolan M."/>
            <person name="Davis M.J."/>
            <person name="Wilming L.G."/>
            <person name="Aidinis V."/>
            <person name="Allen J.E."/>
            <person name="Ambesi-Impiombato A."/>
            <person name="Apweiler R."/>
            <person name="Aturaliya R.N."/>
            <person name="Bailey T.L."/>
            <person name="Bansal M."/>
            <person name="Baxter L."/>
            <person name="Beisel K.W."/>
            <person name="Bersano T."/>
            <person name="Bono H."/>
            <person name="Chalk A.M."/>
            <person name="Chiu K.P."/>
            <person name="Choudhary V."/>
            <person name="Christoffels A."/>
            <person name="Clutterbuck D.R."/>
            <person name="Crowe M.L."/>
            <person name="Dalla E."/>
            <person name="Dalrymple B.P."/>
            <person name="de Bono B."/>
            <person name="Della Gatta G."/>
            <person name="di Bernardo D."/>
            <person name="Down T."/>
            <person name="Engstrom P."/>
            <person name="Fagiolini M."/>
            <person name="Faulkner G."/>
            <person name="Fletcher C.F."/>
            <person name="Fukushima T."/>
            <person name="Furuno M."/>
            <person name="Futaki S."/>
            <person name="Gariboldi M."/>
            <person name="Georgii-Hemming P."/>
            <person name="Gingeras T.R."/>
            <person name="Gojobori T."/>
            <person name="Green R.E."/>
            <person name="Gustincich S."/>
            <person name="Harbers M."/>
            <person name="Hayashi Y."/>
            <person name="Hensch T.K."/>
            <person name="Hirokawa N."/>
            <person name="Hill D."/>
            <person name="Huminiecki L."/>
            <person name="Iacono M."/>
            <person name="Ikeo K."/>
            <person name="Iwama A."/>
            <person name="Ishikawa T."/>
            <person name="Jakt M."/>
            <person name="Kanapin A."/>
            <person name="Katoh M."/>
            <person name="Kawasawa Y."/>
            <person name="Kelso J."/>
            <person name="Kitamura H."/>
            <person name="Kitano H."/>
            <person name="Kollias G."/>
            <person name="Krishnan S.P."/>
            <person name="Kruger A."/>
            <person name="Kummerfeld S.K."/>
            <person name="Kurochkin I.V."/>
            <person name="Lareau L.F."/>
            <person name="Lazarevic D."/>
            <person name="Lipovich L."/>
            <person name="Liu J."/>
            <person name="Liuni S."/>
            <person name="McWilliam S."/>
            <person name="Madan Babu M."/>
            <person name="Madera M."/>
            <person name="Marchionni L."/>
            <person name="Matsuda H."/>
            <person name="Matsuzawa S."/>
            <person name="Miki H."/>
            <person name="Mignone F."/>
            <person name="Miyake S."/>
            <person name="Morris K."/>
            <person name="Mottagui-Tabar S."/>
            <person name="Mulder N."/>
            <person name="Nakano N."/>
            <person name="Nakauchi H."/>
            <person name="Ng P."/>
            <person name="Nilsson R."/>
            <person name="Nishiguchi S."/>
            <person name="Nishikawa S."/>
            <person name="Nori F."/>
            <person name="Ohara O."/>
            <person name="Okazaki Y."/>
            <person name="Orlando V."/>
            <person name="Pang K.C."/>
            <person name="Pavan W.J."/>
            <person name="Pavesi G."/>
            <person name="Pesole G."/>
            <person name="Petrovsky N."/>
            <person name="Piazza S."/>
            <person name="Reed J."/>
            <person name="Reid J.F."/>
            <person name="Ring B.Z."/>
            <person name="Ringwald M."/>
            <person name="Rost B."/>
            <person name="Ruan Y."/>
            <person name="Salzberg S.L."/>
            <person name="Sandelin A."/>
            <person name="Schneider C."/>
            <person name="Schoenbach C."/>
            <person name="Sekiguchi K."/>
            <person name="Semple C.A."/>
            <person name="Seno S."/>
            <person name="Sessa L."/>
            <person name="Sheng Y."/>
            <person name="Shibata Y."/>
            <person name="Shimada H."/>
            <person name="Shimada K."/>
            <person name="Silva D."/>
            <person name="Sinclair B."/>
            <person name="Sperling S."/>
            <person name="Stupka E."/>
            <person name="Sugiura K."/>
            <person name="Sultana R."/>
            <person name="Takenaka Y."/>
            <person name="Taki K."/>
            <person name="Tammoja K."/>
            <person name="Tan S.L."/>
            <person name="Tang S."/>
            <person name="Taylor M.S."/>
            <person name="Tegner J."/>
            <person name="Teichmann S.A."/>
            <person name="Ueda H.R."/>
            <person name="van Nimwegen E."/>
            <person name="Verardo R."/>
            <person name="Wei C.L."/>
            <person name="Yagi K."/>
            <person name="Yamanishi H."/>
            <person name="Zabarovsky E."/>
            <person name="Zhu S."/>
            <person name="Zimmer A."/>
            <person name="Hide W."/>
            <person name="Bult C."/>
            <person name="Grimmond S.M."/>
            <person name="Teasdale R.D."/>
            <person name="Liu E.T."/>
            <person name="Brusic V."/>
            <person name="Quackenbush J."/>
            <person name="Wahlestedt C."/>
            <person name="Mattick J.S."/>
            <person name="Hume D.A."/>
            <person name="Kai C."/>
            <person name="Sasaki D."/>
            <person name="Tomaru Y."/>
            <person name="Fukuda S."/>
            <person name="Kanamori-Katayama M."/>
            <person name="Suzuki M."/>
            <person name="Aoki J."/>
            <person name="Arakawa T."/>
            <person name="Iida J."/>
            <person name="Imamura K."/>
            <person name="Itoh M."/>
            <person name="Kato T."/>
            <person name="Kawaji H."/>
            <person name="Kawagashira N."/>
            <person name="Kawashima T."/>
            <person name="Kojima M."/>
            <person name="Kondo S."/>
            <person name="Konno H."/>
            <person name="Nakano K."/>
            <person name="Ninomiya N."/>
            <person name="Nishio T."/>
            <person name="Okada M."/>
            <person name="Plessy C."/>
            <person name="Shibata K."/>
            <person name="Shiraki T."/>
            <person name="Suzuki S."/>
            <person name="Tagami M."/>
            <person name="Waki K."/>
            <person name="Watahiki A."/>
            <person name="Okamura-Oho Y."/>
            <person name="Suzuki H."/>
            <person name="Kawai J."/>
            <person name="Hayashizaki Y."/>
        </authorList>
    </citation>
    <scope>NUCLEOTIDE SEQUENCE [LARGE SCALE MRNA] OF 1-1106 (ISOFORM 2)</scope>
    <source>
        <strain>C57BL/6J</strain>
        <tissue>Cerebellum</tissue>
        <tissue>Spinal ganglion</tissue>
    </source>
</reference>
<reference key="4">
    <citation type="journal article" date="1989" name="EMBO J.">
        <title>Differential exon usage involving an unusual splicing mechanism generates at least eight types of NCAM cDNA in mouse brain.</title>
        <authorList>
            <person name="Santoni M.J."/>
            <person name="Barthels D."/>
            <person name="Vopper G."/>
            <person name="Boned A."/>
            <person name="Goridis C."/>
            <person name="Wille W."/>
        </authorList>
    </citation>
    <scope>NUCLEOTIDE SEQUENCE [MRNA] OF 20-700 AND 702-1115 (ISOFORMS 1 AND 2)</scope>
    <source>
        <strain>C57BL/6J</strain>
        <tissue>Brain</tissue>
    </source>
</reference>
<reference key="5">
    <citation type="journal article" date="1986" name="J. Biol. Chem.">
        <title>Structural and immunological characterization of the amino-terminal domain of mammalian neural cell adhesion molecules.</title>
        <authorList>
            <person name="Rougon G."/>
            <person name="Marshak D.R."/>
        </authorList>
    </citation>
    <scope>PROTEIN SEQUENCE OF 20-36</scope>
</reference>
<reference key="6">
    <citation type="submission" date="2007-04" db="UniProtKB">
        <authorList>
            <person name="Lubec G."/>
            <person name="Kang S.U."/>
        </authorList>
    </citation>
    <scope>PROTEIN SEQUENCE OF 38-48; 122-152; 166-177; 555-572; 584-595; 607-619; 652-662 AND 685-691</scope>
    <scope>IDENTIFICATION BY MASS SPECTROMETRY</scope>
    <source>
        <strain>C57BL/6J</strain>
        <tissue>Brain</tissue>
    </source>
</reference>
<reference key="7">
    <citation type="journal article" date="1987" name="Nucleic Acids Res.">
        <title>Analysis of cDNA clones that code for the transmembrane forms of the mouse neural cell adhesion molecule (NCAM) and are generated by alternative RNA splicing.</title>
        <authorList>
            <person name="Santoni M.-J."/>
            <person name="Barthels D."/>
            <person name="Barbas J.A."/>
            <person name="Hirsch M.-R."/>
            <person name="Steinmetz M."/>
            <person name="Goridis C."/>
            <person name="Wille W."/>
        </authorList>
    </citation>
    <scope>NUCLEOTIDE SEQUENCE [MRNA] OF 529-1115 (ISOFORM 2)</scope>
    <source>
        <strain>C57BL/6J</strain>
    </source>
</reference>
<reference key="8">
    <citation type="journal article" date="1988" name="EMBO J.">
        <title>Differential splicing and alternative polyadenylation generates distinct NCAM transcripts and proteins in the mouse.</title>
        <authorList>
            <person name="Barbas J.A."/>
            <person name="Chaix J.-C."/>
            <person name="Steinmetz M."/>
            <person name="Goridis C."/>
        </authorList>
    </citation>
    <scope>NUCLEOTIDE SEQUENCE [GENOMIC DNA] OF 642-1115</scope>
</reference>
<reference key="9">
    <citation type="journal article" date="1988" name="Nucleic Acids Res.">
        <title>NCAM-180, the large isoform of the neural cell adhesion molecule of the mouse, is encoded by an alternatively spliced transcript.</title>
        <authorList>
            <person name="Barthels D."/>
            <person name="Vopper G."/>
            <person name="Wille W."/>
        </authorList>
    </citation>
    <scope>NUCLEOTIDE SEQUENCE [MRNA] OF 804-1081 (ISOFORM 1)</scope>
    <source>
        <strain>C57BL/6J</strain>
        <tissue>Brain</tissue>
    </source>
</reference>
<reference key="10">
    <citation type="journal article" date="2000" name="Biochem. Biophys. Res. Commun.">
        <title>LDL receptor-related protein as a component of the midkine receptor.</title>
        <authorList>
            <person name="Muramatsu H."/>
            <person name="Zou K."/>
            <person name="Sakaguchi N."/>
            <person name="Ikematsu S."/>
            <person name="Sakuma S."/>
            <person name="Muramatsu T."/>
        </authorList>
    </citation>
    <scope>INTERACTION WITH MDK</scope>
</reference>
<reference key="11">
    <citation type="journal article" date="2004" name="Anal. Bioanal. Chem.">
        <title>Identification of N-glycosylation sites of the murine neural cell adhesion molecule NCAM by MALDI-TOF and MALDI-FTICR mass spectrometry.</title>
        <authorList>
            <person name="Albach C."/>
            <person name="Damoc E."/>
            <person name="Denzinger T."/>
            <person name="Schachner M."/>
            <person name="Przybylski M."/>
            <person name="Schmitz B."/>
        </authorList>
    </citation>
    <scope>GLYCOSYLATION AT ASN-222; ASN-316; ASN-348; ASN-424; ASN-450 AND ASN-479</scope>
    <scope>IDENTIFICATION BY MASS SPECTROMETRY</scope>
    <source>
        <tissue>Brain</tissue>
    </source>
</reference>
<reference key="12">
    <citation type="journal article" date="2004" name="Mol. Cell. Proteomics">
        <title>Phosphoproteomic analysis of the developing mouse brain.</title>
        <authorList>
            <person name="Ballif B.A."/>
            <person name="Villen J."/>
            <person name="Beausoleil S.A."/>
            <person name="Schwartz D."/>
            <person name="Gygi S.P."/>
        </authorList>
    </citation>
    <scope>PHOSPHORYLATION [LARGE SCALE ANALYSIS] AT SER-946; SER-958 AND SER-1005</scope>
    <scope>IDENTIFICATION BY MASS SPECTROMETRY [LARGE SCALE ANALYSIS]</scope>
    <source>
        <tissue>Embryonic brain</tissue>
    </source>
</reference>
<reference key="13">
    <citation type="journal article" date="2006" name="Mol. Cell. Proteomics">
        <title>Comprehensive identification of phosphorylation sites in postsynaptic density preparations.</title>
        <authorList>
            <person name="Trinidad J.C."/>
            <person name="Specht C.G."/>
            <person name="Thalhammer A."/>
            <person name="Schoepfer R."/>
            <person name="Burlingame A.L."/>
        </authorList>
    </citation>
    <scope>PHOSPHORYLATION [LARGE SCALE ANALYSIS] AT SER-774</scope>
    <scope>IDENTIFICATION BY MASS SPECTROMETRY [LARGE SCALE ANALYSIS]</scope>
    <source>
        <tissue>Brain</tissue>
    </source>
</reference>
<reference key="14">
    <citation type="journal article" date="2009" name="Mol. Cell. Proteomics">
        <title>The mouse C2C12 myoblast cell surface N-linked glycoproteome: identification, glycosite occupancy, and membrane orientation.</title>
        <authorList>
            <person name="Gundry R.L."/>
            <person name="Raginski K."/>
            <person name="Tarasova Y."/>
            <person name="Tchernyshyov I."/>
            <person name="Bausch-Fluck D."/>
            <person name="Elliott S.T."/>
            <person name="Boheler K.R."/>
            <person name="Van Eyk J.E."/>
            <person name="Wollscheid B."/>
        </authorList>
    </citation>
    <scope>GLYCOSYLATION [LARGE SCALE ANALYSIS] AT ASN-450</scope>
    <source>
        <tissue>Myoblast</tissue>
    </source>
</reference>
<reference key="15">
    <citation type="journal article" date="2009" name="Nat. Biotechnol.">
        <title>Mass-spectrometric identification and relative quantification of N-linked cell surface glycoproteins.</title>
        <authorList>
            <person name="Wollscheid B."/>
            <person name="Bausch-Fluck D."/>
            <person name="Henderson C."/>
            <person name="O'Brien R."/>
            <person name="Bibel M."/>
            <person name="Schiess R."/>
            <person name="Aebersold R."/>
            <person name="Watts J.D."/>
        </authorList>
    </citation>
    <scope>GLYCOSYLATION [LARGE SCALE ANALYSIS] AT ASN-450</scope>
</reference>
<reference key="16">
    <citation type="journal article" date="2010" name="Cell">
        <title>A tissue-specific atlas of mouse protein phosphorylation and expression.</title>
        <authorList>
            <person name="Huttlin E.L."/>
            <person name="Jedrychowski M.P."/>
            <person name="Elias J.E."/>
            <person name="Goswami T."/>
            <person name="Rad R."/>
            <person name="Beausoleil S.A."/>
            <person name="Villen J."/>
            <person name="Haas W."/>
            <person name="Sowa M.E."/>
            <person name="Gygi S.P."/>
        </authorList>
    </citation>
    <scope>PHOSPHORYLATION [LARGE SCALE ANALYSIS] AT SER-770; SER-774; SER-887; SER-890; SER-926; THR-929; SER-946; SER-958; THR-1001; SER-1005 AND THR-1030</scope>
    <scope>IDENTIFICATION BY MASS SPECTROMETRY [LARGE SCALE ANALYSIS]</scope>
    <source>
        <tissue>Brain</tissue>
        <tissue>Brown adipose tissue</tissue>
        <tissue>Heart</tissue>
        <tissue>Kidney</tissue>
        <tissue>Spleen</tissue>
    </source>
</reference>
<reference key="17">
    <citation type="journal article" date="2017" name="Sci. Rep.">
        <title>A ZIP6-ZIP10 heteromer controls NCAM1 phosphorylation and integration into focal adhesion complexes during epithelial-to-mesenchymal transition.</title>
        <authorList>
            <person name="Brethour D."/>
            <person name="Mehrabian M."/>
            <person name="Williams D."/>
            <person name="Wang X."/>
            <person name="Ghodrati F."/>
            <person name="Ehsani S."/>
            <person name="Rubie E.A."/>
            <person name="Woodgett J.R."/>
            <person name="Sevalle J."/>
            <person name="Xi Z."/>
            <person name="Rogaeva E."/>
            <person name="Schmitt-Ulms G."/>
        </authorList>
    </citation>
    <scope>IDENTIFICATION IN A COMPLEX WITH SLC39A6 AND SLC39A10</scope>
</reference>
<reference key="18">
    <citation type="journal article" date="2022" name="PLoS ONE">
        <title>An Rtn4/Nogo-A-interacting micropeptide modulates synaptic plasticity with age.</title>
        <authorList>
            <person name="Kragness S."/>
            <person name="Clark Z."/>
            <person name="Mullin A."/>
            <person name="Guidry J."/>
            <person name="Earls L.R."/>
        </authorList>
    </citation>
    <scope>INTERACTION WITH PANTS</scope>
</reference>
<reference key="19">
    <citation type="journal article" date="1996" name="Nat. Struct. Biol.">
        <title>The three-dimensional structure of the first domain of neural cell adhesion molecule.</title>
        <authorList>
            <person name="Thomsen N.K."/>
            <person name="Soroka V."/>
            <person name="Jensen P.H."/>
            <person name="Berezin V."/>
            <person name="Kiselyov V.V."/>
            <person name="Bock E."/>
            <person name="Poulsen F.M."/>
        </authorList>
    </citation>
    <scope>STRUCTURE BY NMR OF 20-116</scope>
    <scope>DISULFIDE BONDS</scope>
</reference>
<reference key="20">
    <citation type="journal article" date="1999" name="Nat. Struct. Biol.">
        <title>Structure and interactions of NCAM modules 1 and 2, basic elements in neural cell adhesion.</title>
        <authorList>
            <person name="Jensen P.H."/>
            <person name="Soroka V."/>
            <person name="Thomsen N.K."/>
            <person name="Ralets I."/>
            <person name="Berezin V."/>
            <person name="Bock E."/>
            <person name="Poulsen F.M."/>
        </authorList>
    </citation>
    <scope>STRUCTURE BY NMR OF 119-208</scope>
    <scope>DISULFIDE BONDS</scope>
</reference>
<dbReference type="EMBL" id="Y00051">
    <property type="protein sequence ID" value="CAA68263.1"/>
    <property type="molecule type" value="mRNA"/>
</dbReference>
<dbReference type="EMBL" id="BC011310">
    <property type="protein sequence ID" value="AAH11310.1"/>
    <property type="molecule type" value="mRNA"/>
</dbReference>
<dbReference type="EMBL" id="AK051197">
    <property type="protein sequence ID" value="BAC34554.2"/>
    <property type="molecule type" value="mRNA"/>
</dbReference>
<dbReference type="EMBL" id="AK082621">
    <property type="protein sequence ID" value="BAC38551.2"/>
    <property type="molecule type" value="mRNA"/>
</dbReference>
<dbReference type="EMBL" id="X15049">
    <property type="protein sequence ID" value="CAA33148.1"/>
    <property type="molecule type" value="mRNA"/>
</dbReference>
<dbReference type="EMBL" id="X15051">
    <property type="protein sequence ID" value="CAA33150.1"/>
    <property type="molecule type" value="mRNA"/>
</dbReference>
<dbReference type="EMBL" id="X15052">
    <property type="protein sequence ID" value="CAA33151.1"/>
    <property type="molecule type" value="mRNA"/>
</dbReference>
<dbReference type="EMBL" id="X06328">
    <property type="protein sequence ID" value="CAA29641.1"/>
    <property type="molecule type" value="mRNA"/>
</dbReference>
<dbReference type="EMBL" id="X07195">
    <property type="protein sequence ID" value="CAA30173.1"/>
    <property type="molecule type" value="Genomic_DNA"/>
</dbReference>
<dbReference type="EMBL" id="X07197">
    <property type="protein sequence ID" value="CAA30175.1"/>
    <property type="molecule type" value="Genomic_DNA"/>
</dbReference>
<dbReference type="EMBL" id="X07198">
    <property type="protein sequence ID" value="CAB40820.1"/>
    <property type="molecule type" value="Genomic_DNA"/>
</dbReference>
<dbReference type="EMBL" id="X07200">
    <property type="protein sequence ID" value="CAA30177.1"/>
    <property type="molecule type" value="Genomic_DNA"/>
</dbReference>
<dbReference type="EMBL" id="X07244">
    <property type="protein sequence ID" value="CAA30230.1"/>
    <property type="molecule type" value="mRNA"/>
</dbReference>
<dbReference type="CCDS" id="CCDS40617.1">
    <molecule id="P13595-2"/>
</dbReference>
<dbReference type="CCDS" id="CCDS40618.1">
    <molecule id="P13595-3"/>
</dbReference>
<dbReference type="PIR" id="A29673">
    <property type="entry name" value="IJMSNL"/>
</dbReference>
<dbReference type="RefSeq" id="NP_001074914.1">
    <property type="nucleotide sequence ID" value="NM_001081445.1"/>
</dbReference>
<dbReference type="RefSeq" id="NP_001106675.1">
    <property type="nucleotide sequence ID" value="NM_001113204.1"/>
</dbReference>
<dbReference type="RefSeq" id="NP_001297994.1">
    <property type="nucleotide sequence ID" value="NM_001311065.1"/>
</dbReference>
<dbReference type="RefSeq" id="NP_035005.2">
    <property type="nucleotide sequence ID" value="NM_010875.3"/>
</dbReference>
<dbReference type="PDB" id="2NCM">
    <property type="method" value="NMR"/>
    <property type="chains" value="A=20-116"/>
</dbReference>
<dbReference type="PDB" id="3NCM">
    <property type="method" value="NMR"/>
    <property type="chains" value="A=119-208"/>
</dbReference>
<dbReference type="PDBsum" id="2NCM"/>
<dbReference type="PDBsum" id="3NCM"/>
<dbReference type="BMRB" id="P13595"/>
<dbReference type="SMR" id="P13595"/>
<dbReference type="BioGRID" id="201699">
    <property type="interactions" value="27"/>
</dbReference>
<dbReference type="CORUM" id="P13595"/>
<dbReference type="FunCoup" id="P13595">
    <property type="interactions" value="664"/>
</dbReference>
<dbReference type="IntAct" id="P13595">
    <property type="interactions" value="7"/>
</dbReference>
<dbReference type="MINT" id="P13595"/>
<dbReference type="STRING" id="10090.ENSMUSP00000130668"/>
<dbReference type="GlyConnect" id="2535">
    <property type="glycosylation" value="6 N-Linked glycans (3 sites)"/>
</dbReference>
<dbReference type="GlyCosmos" id="P13595">
    <property type="glycosylation" value="6 sites, 6 glycans"/>
</dbReference>
<dbReference type="GlyGen" id="P13595">
    <property type="glycosylation" value="13 sites, 8 N-linked glycans (3 sites), 1 O-linked glycan (4 sites)"/>
</dbReference>
<dbReference type="iPTMnet" id="P13595"/>
<dbReference type="PhosphoSitePlus" id="P13595"/>
<dbReference type="SwissPalm" id="P13595"/>
<dbReference type="CPTAC" id="non-CPTAC-3846"/>
<dbReference type="jPOST" id="P13595"/>
<dbReference type="PaxDb" id="10090-ENSMUSP00000130668"/>
<dbReference type="PeptideAtlas" id="P13595"/>
<dbReference type="ProteomicsDB" id="287445">
    <molecule id="P13595-1"/>
</dbReference>
<dbReference type="ProteomicsDB" id="287446">
    <molecule id="P13595-2"/>
</dbReference>
<dbReference type="ProteomicsDB" id="287447">
    <molecule id="P13595-3"/>
</dbReference>
<dbReference type="ProteomicsDB" id="287448">
    <molecule id="P13595-4"/>
</dbReference>
<dbReference type="Pumba" id="P13595"/>
<dbReference type="DNASU" id="17967"/>
<dbReference type="GeneID" id="17967"/>
<dbReference type="KEGG" id="mmu:17967"/>
<dbReference type="UCSC" id="uc009pje.2">
    <molecule id="P13595-1"/>
    <property type="organism name" value="mouse"/>
</dbReference>
<dbReference type="AGR" id="MGI:97281"/>
<dbReference type="CTD" id="4684"/>
<dbReference type="MGI" id="MGI:97281">
    <property type="gene designation" value="Ncam1"/>
</dbReference>
<dbReference type="eggNOG" id="KOG3510">
    <property type="taxonomic scope" value="Eukaryota"/>
</dbReference>
<dbReference type="InParanoid" id="P13595"/>
<dbReference type="PhylomeDB" id="P13595"/>
<dbReference type="Reactome" id="R-MMU-375165">
    <property type="pathway name" value="NCAM signaling for neurite out-growth"/>
</dbReference>
<dbReference type="Reactome" id="R-MMU-419037">
    <property type="pathway name" value="NCAM1 interactions"/>
</dbReference>
<dbReference type="Reactome" id="R-MMU-445144">
    <property type="pathway name" value="Signal transduction by L1"/>
</dbReference>
<dbReference type="Reactome" id="R-MMU-5673001">
    <property type="pathway name" value="RAF/MAP kinase cascade"/>
</dbReference>
<dbReference type="BioGRID-ORCS" id="17967">
    <property type="hits" value="1 hit in 78 CRISPR screens"/>
</dbReference>
<dbReference type="ChiTaRS" id="Ncam1">
    <property type="organism name" value="mouse"/>
</dbReference>
<dbReference type="EvolutionaryTrace" id="P13595"/>
<dbReference type="PRO" id="PR:P13595"/>
<dbReference type="Proteomes" id="UP000000589">
    <property type="component" value="Unplaced"/>
</dbReference>
<dbReference type="RNAct" id="P13595">
    <property type="molecule type" value="protein"/>
</dbReference>
<dbReference type="GO" id="GO:0030424">
    <property type="term" value="C:axon"/>
    <property type="evidence" value="ECO:0000314"/>
    <property type="project" value="MGI"/>
</dbReference>
<dbReference type="GO" id="GO:0005911">
    <property type="term" value="C:cell-cell junction"/>
    <property type="evidence" value="ECO:0000314"/>
    <property type="project" value="MGI"/>
</dbReference>
<dbReference type="GO" id="GO:0009897">
    <property type="term" value="C:external side of plasma membrane"/>
    <property type="evidence" value="ECO:0000314"/>
    <property type="project" value="MGI"/>
</dbReference>
<dbReference type="GO" id="GO:0030426">
    <property type="term" value="C:growth cone"/>
    <property type="evidence" value="ECO:0000314"/>
    <property type="project" value="MGI"/>
</dbReference>
<dbReference type="GO" id="GO:0043209">
    <property type="term" value="C:myelin sheath"/>
    <property type="evidence" value="ECO:0007005"/>
    <property type="project" value="UniProtKB"/>
</dbReference>
<dbReference type="GO" id="GO:0043025">
    <property type="term" value="C:neuronal cell body"/>
    <property type="evidence" value="ECO:0000314"/>
    <property type="project" value="MGI"/>
</dbReference>
<dbReference type="GO" id="GO:0005886">
    <property type="term" value="C:plasma membrane"/>
    <property type="evidence" value="ECO:0000304"/>
    <property type="project" value="Reactome"/>
</dbReference>
<dbReference type="GO" id="GO:0008201">
    <property type="term" value="F:heparin binding"/>
    <property type="evidence" value="ECO:0007669"/>
    <property type="project" value="UniProtKB-KW"/>
</dbReference>
<dbReference type="GO" id="GO:0019722">
    <property type="term" value="P:calcium-mediated signaling"/>
    <property type="evidence" value="ECO:0000314"/>
    <property type="project" value="MGI"/>
</dbReference>
<dbReference type="GO" id="GO:0007166">
    <property type="term" value="P:cell surface receptor signaling pathway"/>
    <property type="evidence" value="ECO:0000314"/>
    <property type="project" value="MGI"/>
</dbReference>
<dbReference type="GO" id="GO:0071679">
    <property type="term" value="P:commissural neuron axon guidance"/>
    <property type="evidence" value="ECO:0000316"/>
    <property type="project" value="ARUK-UCL"/>
</dbReference>
<dbReference type="GO" id="GO:0001837">
    <property type="term" value="P:epithelial to mesenchymal transition"/>
    <property type="evidence" value="ECO:0000314"/>
    <property type="project" value="UniProtKB"/>
</dbReference>
<dbReference type="GO" id="GO:0034109">
    <property type="term" value="P:homotypic cell-cell adhesion"/>
    <property type="evidence" value="ECO:0000315"/>
    <property type="project" value="MGI"/>
</dbReference>
<dbReference type="GO" id="GO:0031175">
    <property type="term" value="P:neuron projection development"/>
    <property type="evidence" value="ECO:0000316"/>
    <property type="project" value="MGI"/>
</dbReference>
<dbReference type="GO" id="GO:0050850">
    <property type="term" value="P:positive regulation of calcium-mediated signaling"/>
    <property type="evidence" value="ECO:0000314"/>
    <property type="project" value="MGI"/>
</dbReference>
<dbReference type="GO" id="GO:0001928">
    <property type="term" value="P:regulation of exocyst assembly"/>
    <property type="evidence" value="ECO:0000315"/>
    <property type="project" value="MGI"/>
</dbReference>
<dbReference type="GO" id="GO:2001260">
    <property type="term" value="P:regulation of semaphorin-plexin signaling pathway"/>
    <property type="evidence" value="ECO:0000316"/>
    <property type="project" value="ARUK-UCL"/>
</dbReference>
<dbReference type="CDD" id="cd00063">
    <property type="entry name" value="FN3"/>
    <property type="match status" value="2"/>
</dbReference>
<dbReference type="CDD" id="cd00096">
    <property type="entry name" value="Ig"/>
    <property type="match status" value="2"/>
</dbReference>
<dbReference type="CDD" id="cd05865">
    <property type="entry name" value="IgI_1_NCAM-1"/>
    <property type="match status" value="1"/>
</dbReference>
<dbReference type="CDD" id="cd05730">
    <property type="entry name" value="IgI_3_NCAM-1"/>
    <property type="match status" value="1"/>
</dbReference>
<dbReference type="CDD" id="cd05869">
    <property type="entry name" value="IgI_NCAM-1"/>
    <property type="match status" value="1"/>
</dbReference>
<dbReference type="FunFam" id="2.60.40.10:FF:000086">
    <property type="entry name" value="Neural cell adhesion molecule 1"/>
    <property type="match status" value="1"/>
</dbReference>
<dbReference type="FunFam" id="2.60.40.10:FF:000173">
    <property type="entry name" value="Neural cell adhesion molecule 1"/>
    <property type="match status" value="1"/>
</dbReference>
<dbReference type="FunFam" id="2.60.40.10:FF:000151">
    <property type="entry name" value="neural cell adhesion molecule 1 isoform X1"/>
    <property type="match status" value="1"/>
</dbReference>
<dbReference type="FunFam" id="2.60.40.10:FF:000137">
    <property type="entry name" value="neural cell adhesion molecule 1 isoform X2"/>
    <property type="match status" value="1"/>
</dbReference>
<dbReference type="FunFam" id="2.60.40.10:FF:000149">
    <property type="entry name" value="neural cell adhesion molecule 1 isoform X2"/>
    <property type="match status" value="1"/>
</dbReference>
<dbReference type="FunFam" id="2.60.40.10:FF:000159">
    <property type="entry name" value="neural cell adhesion molecule 1 isoform X2"/>
    <property type="match status" value="1"/>
</dbReference>
<dbReference type="FunFam" id="2.60.40.10:FF:000221">
    <property type="entry name" value="neural cell adhesion molecule 1 isoform X2"/>
    <property type="match status" value="1"/>
</dbReference>
<dbReference type="Gene3D" id="2.60.40.10">
    <property type="entry name" value="Immunoglobulins"/>
    <property type="match status" value="7"/>
</dbReference>
<dbReference type="InterPro" id="IPR003961">
    <property type="entry name" value="FN3_dom"/>
</dbReference>
<dbReference type="InterPro" id="IPR036116">
    <property type="entry name" value="FN3_sf"/>
</dbReference>
<dbReference type="InterPro" id="IPR007110">
    <property type="entry name" value="Ig-like_dom"/>
</dbReference>
<dbReference type="InterPro" id="IPR036179">
    <property type="entry name" value="Ig-like_dom_sf"/>
</dbReference>
<dbReference type="InterPro" id="IPR013783">
    <property type="entry name" value="Ig-like_fold"/>
</dbReference>
<dbReference type="InterPro" id="IPR013098">
    <property type="entry name" value="Ig_I-set"/>
</dbReference>
<dbReference type="InterPro" id="IPR003599">
    <property type="entry name" value="Ig_sub"/>
</dbReference>
<dbReference type="InterPro" id="IPR003598">
    <property type="entry name" value="Ig_sub2"/>
</dbReference>
<dbReference type="InterPro" id="IPR013106">
    <property type="entry name" value="Ig_V-set"/>
</dbReference>
<dbReference type="InterPro" id="IPR009138">
    <property type="entry name" value="Neural_cell_adh"/>
</dbReference>
<dbReference type="PANTHER" id="PTHR10075">
    <property type="entry name" value="BASIGIN RELATED"/>
    <property type="match status" value="1"/>
</dbReference>
<dbReference type="PANTHER" id="PTHR10075:SF14">
    <property type="entry name" value="CELL ADHESION MOLECULE DSCAM2-RELATED"/>
    <property type="match status" value="1"/>
</dbReference>
<dbReference type="Pfam" id="PF00041">
    <property type="entry name" value="fn3"/>
    <property type="match status" value="2"/>
</dbReference>
<dbReference type="Pfam" id="PF07679">
    <property type="entry name" value="I-set"/>
    <property type="match status" value="2"/>
</dbReference>
<dbReference type="Pfam" id="PF13927">
    <property type="entry name" value="Ig_3"/>
    <property type="match status" value="3"/>
</dbReference>
<dbReference type="PRINTS" id="PR01838">
    <property type="entry name" value="NCAMFAMILY"/>
</dbReference>
<dbReference type="SMART" id="SM00060">
    <property type="entry name" value="FN3"/>
    <property type="match status" value="2"/>
</dbReference>
<dbReference type="SMART" id="SM00409">
    <property type="entry name" value="IG"/>
    <property type="match status" value="5"/>
</dbReference>
<dbReference type="SMART" id="SM00408">
    <property type="entry name" value="IGc2"/>
    <property type="match status" value="5"/>
</dbReference>
<dbReference type="SMART" id="SM00406">
    <property type="entry name" value="IGv"/>
    <property type="match status" value="2"/>
</dbReference>
<dbReference type="SUPFAM" id="SSF49265">
    <property type="entry name" value="Fibronectin type III"/>
    <property type="match status" value="1"/>
</dbReference>
<dbReference type="SUPFAM" id="SSF48726">
    <property type="entry name" value="Immunoglobulin"/>
    <property type="match status" value="5"/>
</dbReference>
<dbReference type="PROSITE" id="PS50853">
    <property type="entry name" value="FN3"/>
    <property type="match status" value="2"/>
</dbReference>
<dbReference type="PROSITE" id="PS50835">
    <property type="entry name" value="IG_LIKE"/>
    <property type="match status" value="5"/>
</dbReference>
<keyword id="KW-0002">3D-structure</keyword>
<keyword id="KW-0025">Alternative splicing</keyword>
<keyword id="KW-0130">Cell adhesion</keyword>
<keyword id="KW-1003">Cell membrane</keyword>
<keyword id="KW-0903">Direct protein sequencing</keyword>
<keyword id="KW-1015">Disulfide bond</keyword>
<keyword id="KW-0325">Glycoprotein</keyword>
<keyword id="KW-0336">GPI-anchor</keyword>
<keyword id="KW-0358">Heparin-binding</keyword>
<keyword id="KW-0393">Immunoglobulin domain</keyword>
<keyword id="KW-0449">Lipoprotein</keyword>
<keyword id="KW-0472">Membrane</keyword>
<keyword id="KW-0597">Phosphoprotein</keyword>
<keyword id="KW-1185">Reference proteome</keyword>
<keyword id="KW-0677">Repeat</keyword>
<keyword id="KW-0732">Signal</keyword>
<keyword id="KW-0812">Transmembrane</keyword>
<keyword id="KW-1133">Transmembrane helix</keyword>
<proteinExistence type="evidence at protein level"/>
<organism>
    <name type="scientific">Mus musculus</name>
    <name type="common">Mouse</name>
    <dbReference type="NCBI Taxonomy" id="10090"/>
    <lineage>
        <taxon>Eukaryota</taxon>
        <taxon>Metazoa</taxon>
        <taxon>Chordata</taxon>
        <taxon>Craniata</taxon>
        <taxon>Vertebrata</taxon>
        <taxon>Euteleostomi</taxon>
        <taxon>Mammalia</taxon>
        <taxon>Eutheria</taxon>
        <taxon>Euarchontoglires</taxon>
        <taxon>Glires</taxon>
        <taxon>Rodentia</taxon>
        <taxon>Myomorpha</taxon>
        <taxon>Muroidea</taxon>
        <taxon>Muridae</taxon>
        <taxon>Murinae</taxon>
        <taxon>Mus</taxon>
        <taxon>Mus</taxon>
    </lineage>
</organism>
<protein>
    <recommendedName>
        <fullName evidence="19">Neural cell adhesion molecule 1</fullName>
        <shortName>N-CAM-1</shortName>
        <shortName>NCAM-1</shortName>
    </recommendedName>
    <cdAntigenName>CD56</cdAntigenName>
</protein>
<feature type="signal peptide" evidence="11">
    <location>
        <begin position="1"/>
        <end position="19"/>
    </location>
</feature>
<feature type="chain" id="PRO_0000015012" description="Neural cell adhesion molecule 1">
    <location>
        <begin position="20"/>
        <end position="1115"/>
    </location>
</feature>
<feature type="topological domain" description="Extracellular" evidence="2">
    <location>
        <begin position="20"/>
        <end position="711"/>
    </location>
</feature>
<feature type="transmembrane region" description="Helical" evidence="2">
    <location>
        <begin position="712"/>
        <end position="729"/>
    </location>
</feature>
<feature type="topological domain" description="Cytoplasmic" evidence="2">
    <location>
        <begin position="730"/>
        <end position="1115"/>
    </location>
</feature>
<feature type="domain" description="Ig-like C2-type 1">
    <location>
        <begin position="20"/>
        <end position="111"/>
    </location>
</feature>
<feature type="domain" description="Ig-like C2-type 2">
    <location>
        <begin position="116"/>
        <end position="205"/>
    </location>
</feature>
<feature type="domain" description="Ig-like C2-type 3">
    <location>
        <begin position="212"/>
        <end position="302"/>
    </location>
</feature>
<feature type="domain" description="Ig-like C2-type 4">
    <location>
        <begin position="309"/>
        <end position="402"/>
    </location>
</feature>
<feature type="domain" description="Ig-like C2-type 5">
    <location>
        <begin position="407"/>
        <end position="492"/>
    </location>
</feature>
<feature type="domain" description="Fibronectin type-III 1" evidence="3">
    <location>
        <begin position="500"/>
        <end position="599"/>
    </location>
</feature>
<feature type="domain" description="Fibronectin type-III 2" evidence="3">
    <location>
        <begin position="601"/>
        <end position="696"/>
    </location>
</feature>
<feature type="region of interest" description="Disordered" evidence="4">
    <location>
        <begin position="756"/>
        <end position="809"/>
    </location>
</feature>
<feature type="region of interest" description="Disordered" evidence="4">
    <location>
        <begin position="839"/>
        <end position="912"/>
    </location>
</feature>
<feature type="region of interest" description="Disordered" evidence="4">
    <location>
        <begin position="924"/>
        <end position="1115"/>
    </location>
</feature>
<feature type="compositionally biased region" description="Basic and acidic residues" evidence="4">
    <location>
        <begin position="758"/>
        <end position="799"/>
    </location>
</feature>
<feature type="compositionally biased region" description="Low complexity" evidence="4">
    <location>
        <begin position="800"/>
        <end position="809"/>
    </location>
</feature>
<feature type="compositionally biased region" description="Low complexity" evidence="4">
    <location>
        <begin position="845"/>
        <end position="856"/>
    </location>
</feature>
<feature type="compositionally biased region" description="Low complexity" evidence="4">
    <location>
        <begin position="876"/>
        <end position="896"/>
    </location>
</feature>
<feature type="compositionally biased region" description="Polar residues" evidence="4">
    <location>
        <begin position="902"/>
        <end position="912"/>
    </location>
</feature>
<feature type="compositionally biased region" description="Polar residues" evidence="4">
    <location>
        <begin position="926"/>
        <end position="935"/>
    </location>
</feature>
<feature type="compositionally biased region" description="Low complexity" evidence="4">
    <location>
        <begin position="936"/>
        <end position="974"/>
    </location>
</feature>
<feature type="compositionally biased region" description="Low complexity" evidence="4">
    <location>
        <begin position="999"/>
        <end position="1012"/>
    </location>
</feature>
<feature type="compositionally biased region" description="Basic and acidic residues" evidence="4">
    <location>
        <begin position="1019"/>
        <end position="1037"/>
    </location>
</feature>
<feature type="compositionally biased region" description="Basic and acidic residues" evidence="4">
    <location>
        <begin position="1074"/>
        <end position="1091"/>
    </location>
</feature>
<feature type="binding site" evidence="2">
    <location>
        <begin position="152"/>
        <end position="156"/>
    </location>
    <ligand>
        <name>heparin</name>
        <dbReference type="ChEBI" id="CHEBI:28304"/>
    </ligand>
</feature>
<feature type="binding site" evidence="2">
    <location>
        <begin position="161"/>
        <end position="165"/>
    </location>
    <ligand>
        <name>heparin</name>
        <dbReference type="ChEBI" id="CHEBI:28304"/>
    </ligand>
</feature>
<feature type="modified residue" description="Phosphoserine" evidence="25">
    <location>
        <position position="770"/>
    </location>
</feature>
<feature type="modified residue" description="Phosphoserine" evidence="24 25">
    <location>
        <position position="774"/>
    </location>
</feature>
<feature type="modified residue" description="Phosphoserine" evidence="25">
    <location>
        <position position="887"/>
    </location>
</feature>
<feature type="modified residue" description="Phosphoserine" evidence="25">
    <location>
        <position position="890"/>
    </location>
</feature>
<feature type="modified residue" description="Phosphoserine" evidence="25">
    <location>
        <position position="926"/>
    </location>
</feature>
<feature type="modified residue" description="Phosphothreonine" evidence="25">
    <location>
        <position position="929"/>
    </location>
</feature>
<feature type="modified residue" description="Phosphoserine" evidence="23 25">
    <location>
        <position position="946"/>
    </location>
</feature>
<feature type="modified residue" description="Phosphoserine" evidence="23 25">
    <location>
        <position position="958"/>
    </location>
</feature>
<feature type="modified residue" description="Phosphothreonine" evidence="25">
    <location>
        <position position="1001"/>
    </location>
</feature>
<feature type="modified residue" description="Phosphoserine" evidence="23 25">
    <location>
        <position position="1005"/>
    </location>
</feature>
<feature type="modified residue" description="Phosphothreonine" evidence="25">
    <location>
        <position position="1030"/>
    </location>
</feature>
<feature type="glycosylation site" description="N-linked (GlcNAc...) asparagine; partial" evidence="7">
    <location>
        <position position="222"/>
    </location>
</feature>
<feature type="glycosylation site" description="N-linked (GlcNAc...) asparagine" evidence="7">
    <location>
        <position position="316"/>
    </location>
</feature>
<feature type="glycosylation site" description="N-linked (GlcNAc...) asparagine" evidence="7">
    <location>
        <position position="348"/>
    </location>
</feature>
<feature type="glycosylation site" description="N-linked (GlcNAc...) asparagine" evidence="7">
    <location>
        <position position="424"/>
    </location>
</feature>
<feature type="glycosylation site" description="N-linked (GlcNAc...) asparagine" evidence="7 8 9">
    <location>
        <position position="450"/>
    </location>
</feature>
<feature type="glycosylation site" description="N-linked (GlcNAc...) asparagine" evidence="7">
    <location>
        <position position="479"/>
    </location>
</feature>
<feature type="disulfide bond" evidence="13 21">
    <location>
        <begin position="41"/>
        <end position="96"/>
    </location>
</feature>
<feature type="disulfide bond" evidence="5 22">
    <location>
        <begin position="139"/>
        <end position="189"/>
    </location>
</feature>
<feature type="disulfide bond" evidence="19">
    <location>
        <begin position="235"/>
        <end position="288"/>
    </location>
</feature>
<feature type="disulfide bond" evidence="19">
    <location>
        <begin position="330"/>
        <end position="386"/>
    </location>
</feature>
<feature type="disulfide bond" evidence="19">
    <location>
        <begin position="427"/>
        <end position="480"/>
    </location>
</feature>
<feature type="splice variant" id="VSP_034826" description="In isoform 4." evidence="14">
    <original>EPSAP</original>
    <variation>KSSLF</variation>
    <location>
        <begin position="601"/>
        <end position="605"/>
    </location>
</feature>
<feature type="splice variant" id="VSP_034827" description="In isoform 4." evidence="14">
    <location>
        <begin position="606"/>
        <end position="1115"/>
    </location>
</feature>
<feature type="splice variant" id="VSP_034828" description="In isoform 3." evidence="17">
    <original>NGSPTAGLSTGAIVGILIVIFVLL</original>
    <variation>TLGGSSTSYTLVSLLFSAVTLLLL</variation>
    <location>
        <begin position="702"/>
        <end position="725"/>
    </location>
</feature>
<feature type="splice variant" id="VSP_034829" description="In isoform 3." evidence="17">
    <location>
        <begin position="726"/>
        <end position="1115"/>
    </location>
</feature>
<feature type="splice variant" id="VSP_002588" description="In isoform 2." evidence="15 16 18">
    <location>
        <begin position="810"/>
        <end position="1076"/>
    </location>
</feature>
<feature type="sequence conflict" description="In Ref. 4; CAA33148." evidence="19" ref="4">
    <original>L</original>
    <variation>M</variation>
    <location>
        <position position="20"/>
    </location>
</feature>
<feature type="sequence conflict" description="In Ref. 2; AAH11310." evidence="19" ref="2">
    <original>V</original>
    <variation>F</variation>
    <location>
        <position position="158"/>
    </location>
</feature>
<feature type="sequence conflict" description="In Ref. 1; CAA68263." evidence="19" ref="1">
    <original>DEKHIFSD</original>
    <variation>ERSRSSVS</variation>
    <location>
        <begin position="261"/>
        <end position="268"/>
    </location>
</feature>
<feature type="sequence conflict" description="In Ref. 1; CAA68263." evidence="19" ref="1">
    <original>L</original>
    <variation>V</variation>
    <location>
        <position position="273"/>
    </location>
</feature>
<feature type="sequence conflict" description="In Ref. 1; CAA68263." evidence="19" ref="1">
    <original>KT</original>
    <variation>QD</variation>
    <location>
        <begin position="354"/>
        <end position="355"/>
    </location>
</feature>
<feature type="sequence conflict" description="In Ref. 1; CAA68263 and 4; CAA33148." evidence="19" ref="1 4">
    <original>T</original>
    <variation>R</variation>
    <location>
        <position position="379"/>
    </location>
</feature>
<feature type="sequence conflict" description="In Ref. 1; CAA68263 and 4; CAA33148." evidence="19" ref="1 4">
    <original>I</original>
    <variation>M</variation>
    <location>
        <position position="385"/>
    </location>
</feature>
<feature type="sequence conflict" description="In Ref. 1; CAA68263 and 4; CAA33148." evidence="19" ref="1 4">
    <original>MY</original>
    <variation>ID</variation>
    <location>
        <begin position="399"/>
        <end position="400"/>
    </location>
</feature>
<feature type="sequence conflict" description="In Ref. 2; AAH11310 and 3; BAC34554/BAC38551." evidence="19" ref="2 3">
    <original>F</original>
    <variation>V</variation>
    <location>
        <position position="403"/>
    </location>
</feature>
<feature type="sequence conflict" description="In Ref. 1; CAA68263." evidence="19" ref="1">
    <original>K</original>
    <variation>T</variation>
    <location>
        <position position="549"/>
    </location>
</feature>
<feature type="sequence conflict" description="In Ref. 1; CAA68263." evidence="19" ref="1">
    <original>R</original>
    <variation>T</variation>
    <location>
        <position position="572"/>
    </location>
</feature>
<feature type="sequence conflict" description="In Ref. 1; CAA68263." evidence="19" ref="1">
    <original>V</original>
    <variation>D</variation>
    <location>
        <position position="575"/>
    </location>
</feature>
<feature type="sequence conflict" description="In Ref. 1; CAA68263." evidence="19" ref="1">
    <original>SAATEF</original>
    <variation>MQPSES</variation>
    <location>
        <begin position="589"/>
        <end position="594"/>
    </location>
</feature>
<feature type="sequence conflict" description="In Ref. 1; CAA68263." evidence="19" ref="1">
    <original>REP</original>
    <variation>PEL</variation>
    <location>
        <begin position="600"/>
        <end position="602"/>
    </location>
</feature>
<feature type="sequence conflict" description="In Ref. 1; CAA68263." evidence="19" ref="1">
    <original>D</original>
    <variation>H</variation>
    <location>
        <position position="657"/>
    </location>
</feature>
<feature type="sequence conflict" description="In Ref. 3; BAC34554." evidence="19" ref="3">
    <original>C</original>
    <variation>W</variation>
    <location>
        <position position="733"/>
    </location>
</feature>
<feature type="sequence conflict" description="In Ref. 3; BAC34554." evidence="19" ref="3">
    <original>T</original>
    <variation>A</variation>
    <location>
        <position position="1082"/>
    </location>
</feature>
<feature type="strand" evidence="26">
    <location>
        <begin position="21"/>
        <end position="32"/>
    </location>
</feature>
<feature type="strand" evidence="26">
    <location>
        <begin position="37"/>
        <end position="44"/>
    </location>
</feature>
<feature type="strand" evidence="26">
    <location>
        <begin position="47"/>
        <end position="49"/>
    </location>
</feature>
<feature type="strand" evidence="26">
    <location>
        <begin position="51"/>
        <end position="56"/>
    </location>
</feature>
<feature type="turn" evidence="26">
    <location>
        <begin position="57"/>
        <end position="59"/>
    </location>
</feature>
<feature type="strand" evidence="26">
    <location>
        <begin position="64"/>
        <end position="73"/>
    </location>
</feature>
<feature type="strand" evidence="26">
    <location>
        <begin position="75"/>
        <end position="77"/>
    </location>
</feature>
<feature type="strand" evidence="26">
    <location>
        <begin position="79"/>
        <end position="85"/>
    </location>
</feature>
<feature type="turn" evidence="26">
    <location>
        <begin position="88"/>
        <end position="90"/>
    </location>
</feature>
<feature type="strand" evidence="26">
    <location>
        <begin position="92"/>
        <end position="99"/>
    </location>
</feature>
<feature type="strand" evidence="26">
    <location>
        <begin position="101"/>
        <end position="103"/>
    </location>
</feature>
<feature type="strand" evidence="26">
    <location>
        <begin position="105"/>
        <end position="115"/>
    </location>
</feature>
<feature type="strand" evidence="27">
    <location>
        <begin position="119"/>
        <end position="122"/>
    </location>
</feature>
<feature type="strand" evidence="27">
    <location>
        <begin position="125"/>
        <end position="128"/>
    </location>
</feature>
<feature type="strand" evidence="27">
    <location>
        <begin position="133"/>
        <end position="137"/>
    </location>
</feature>
<feature type="strand" evidence="27">
    <location>
        <begin position="140"/>
        <end position="143"/>
    </location>
</feature>
<feature type="strand" evidence="27">
    <location>
        <begin position="145"/>
        <end position="157"/>
    </location>
</feature>
<feature type="helix" evidence="27">
    <location>
        <begin position="158"/>
        <end position="161"/>
    </location>
</feature>
<feature type="strand" evidence="27">
    <location>
        <begin position="166"/>
        <end position="168"/>
    </location>
</feature>
<feature type="strand" evidence="27">
    <location>
        <begin position="174"/>
        <end position="178"/>
    </location>
</feature>
<feature type="strand" evidence="27">
    <location>
        <begin position="185"/>
        <end position="193"/>
    </location>
</feature>
<feature type="turn" evidence="27">
    <location>
        <begin position="194"/>
        <end position="197"/>
    </location>
</feature>
<feature type="strand" evidence="27">
    <location>
        <begin position="198"/>
        <end position="207"/>
    </location>
</feature>
<feature type="lipid moiety-binding region" description="GPI-anchor amidated serine" evidence="2">
    <location sequence="P13595-3">
        <position position="706"/>
    </location>
</feature>
<sequence>MLRTKDLIWTLFFLGTAVSLQVDIVPSQGEISVGESKFFLCQVAGDAKDKDISWFSPNGEKLSPNQQRISVVWNDDDSSTLTIYNANIDDAGIYKCVVTAEDGTQSEATVNVKIFQKLMFKNAPTPQEFKEGEDAVIVCDVVSSLPPTIIWKHKGRDVILKKDVRFIVLSNNYLQIRGIKKTDEGTYRCEGRILARGEINFKDIQVIVNVPPTVQARQSIVNATANLGQSVTLVCDADGFPEPTMSWTKDGEPIENEEEDDEKHIFSDDSSELTIRNVDKNDEAEYVCIAENKAGEQDASIHLKVFAKPKITYVENQTAMELEEQVTLTCEASGDPIPSITWRTSTRNISSEEKTLDGHMVVRSHARVSSLTLKSIQYTDAGEYICTASNTIGQDSQSMYLEFQYAPKLQGPVAVYTWEGNQVNITCEVFAYPSATISWFRDGQLLPSSNYSNIKIYNTPSASYLEVTPDSENDFGNYNCTAVNRIGQESLEFILVQADTPSSPSIDRVEPYSSTAQVQFDEPEATGGVPILKYKAEWKSLGEESWHFKWYDAKEANMEGIVTIMGLKPETRYSVRLAALNGKGLGEISAATEFKTQPVREPSAPKLEGQMGEDGNSIKVNLIKQDDGGSPIRHYLVKYRALASEWKPEIRLPSGSDHVMLKSLDWNAEYEVYVVAENQQGKSKAAHFVFRTSAQPTAIPANGSPTAGLSTGAIVGILIVIFVLLLVVMDITCYFLNKCGLLMCIAVNLCGKAGPGAKGKDMEEGKAAFSKDESKEPIVEVRTEEERTPNHDGGKHTEPNETTPLTEPELPADTTATVEDMLPSVTTVTTNSDTITETFATAQNSPTSETTTLTSSIAPPATTVPDSNSVPAGQATPSKGVTASSSSPASAPKVAPLVDLSDTPTSAPSASNLSSTVLANQGAVLSPSTPASAGETSKAPPASKASPAPTPTPAGAASPLAAVAAPATDAPQAKQEAPSTKGPDPEPTQPGTVKNPPEAATAPASPKSKAATTNPSQGEDLKMDEGNFKTPDIDLAKDVFAALGSPRPATGASGQASELAPSPADSAVPPAPAKTEKGPVETKSEPPESEAKPAPTEVKTVPNDATQTKENESKA</sequence>